<name>SARZ_STAAR</name>
<protein>
    <recommendedName>
        <fullName>HTH-type transcriptional regulator SarZ</fullName>
    </recommendedName>
    <alternativeName>
        <fullName>Staphylococcal accessory regulator Z</fullName>
    </alternativeName>
</protein>
<comment type="function">
    <text evidence="1">Activates transcription of virulence factors alpha- and beta hemolysin genes (hla and hlb). Also, activates RNAIII expression, a central regulator transcribed from the agr locus (By similarity).</text>
</comment>
<comment type="subcellular location">
    <subcellularLocation>
        <location evidence="1">Cytoplasm</location>
    </subcellularLocation>
</comment>
<comment type="induction">
    <text evidence="1">Transcriptionally activated by CvfA.</text>
</comment>
<comment type="similarity">
    <text evidence="3">Belongs to the SarZ family.</text>
</comment>
<evidence type="ECO:0000250" key="1"/>
<evidence type="ECO:0000255" key="2">
    <source>
        <dbReference type="PROSITE-ProRule" id="PRU00345"/>
    </source>
</evidence>
<evidence type="ECO:0000305" key="3"/>
<sequence length="148" mass="17358">MYVENSYLSKQLCFLFYVSSKEIIKKYTNYLKDYDLTYTGYIVLMAIENDEKLNIKKLGERVFLDSGTLTPLLKKLEKKDYVVRTREEKDERNLQISLTEQGKAIKSPLAEISVKVFNEFNISEREASDIVNNLRNFVSKNFDNSDKK</sequence>
<gene>
    <name type="primary">sarZ</name>
    <name type="ordered locus">SAR2474</name>
</gene>
<proteinExistence type="inferred from homology"/>
<keyword id="KW-0010">Activator</keyword>
<keyword id="KW-0963">Cytoplasm</keyword>
<keyword id="KW-0238">DNA-binding</keyword>
<keyword id="KW-0804">Transcription</keyword>
<keyword id="KW-0805">Transcription regulation</keyword>
<keyword id="KW-0843">Virulence</keyword>
<feature type="chain" id="PRO_0000284456" description="HTH-type transcriptional regulator SarZ">
    <location>
        <begin position="1"/>
        <end position="148"/>
    </location>
</feature>
<feature type="domain" description="HTH marR-type" evidence="2">
    <location>
        <begin position="9"/>
        <end position="139"/>
    </location>
</feature>
<feature type="DNA-binding region" description="H-T-H motif" evidence="2">
    <location>
        <begin position="55"/>
        <end position="78"/>
    </location>
</feature>
<accession>Q6GE46</accession>
<reference key="1">
    <citation type="journal article" date="2004" name="Proc. Natl. Acad. Sci. U.S.A.">
        <title>Complete genomes of two clinical Staphylococcus aureus strains: evidence for the rapid evolution of virulence and drug resistance.</title>
        <authorList>
            <person name="Holden M.T.G."/>
            <person name="Feil E.J."/>
            <person name="Lindsay J.A."/>
            <person name="Peacock S.J."/>
            <person name="Day N.P.J."/>
            <person name="Enright M.C."/>
            <person name="Foster T.J."/>
            <person name="Moore C.E."/>
            <person name="Hurst L."/>
            <person name="Atkin R."/>
            <person name="Barron A."/>
            <person name="Bason N."/>
            <person name="Bentley S.D."/>
            <person name="Chillingworth C."/>
            <person name="Chillingworth T."/>
            <person name="Churcher C."/>
            <person name="Clark L."/>
            <person name="Corton C."/>
            <person name="Cronin A."/>
            <person name="Doggett J."/>
            <person name="Dowd L."/>
            <person name="Feltwell T."/>
            <person name="Hance Z."/>
            <person name="Harris B."/>
            <person name="Hauser H."/>
            <person name="Holroyd S."/>
            <person name="Jagels K."/>
            <person name="James K.D."/>
            <person name="Lennard N."/>
            <person name="Line A."/>
            <person name="Mayes R."/>
            <person name="Moule S."/>
            <person name="Mungall K."/>
            <person name="Ormond D."/>
            <person name="Quail M.A."/>
            <person name="Rabbinowitsch E."/>
            <person name="Rutherford K.M."/>
            <person name="Sanders M."/>
            <person name="Sharp S."/>
            <person name="Simmonds M."/>
            <person name="Stevens K."/>
            <person name="Whitehead S."/>
            <person name="Barrell B.G."/>
            <person name="Spratt B.G."/>
            <person name="Parkhill J."/>
        </authorList>
    </citation>
    <scope>NUCLEOTIDE SEQUENCE [LARGE SCALE GENOMIC DNA]</scope>
    <source>
        <strain>MRSA252</strain>
    </source>
</reference>
<dbReference type="EMBL" id="BX571856">
    <property type="protein sequence ID" value="CAG41456.1"/>
    <property type="molecule type" value="Genomic_DNA"/>
</dbReference>
<dbReference type="RefSeq" id="WP_000289212.1">
    <property type="nucleotide sequence ID" value="NC_002952.2"/>
</dbReference>
<dbReference type="SMR" id="Q6GE46"/>
<dbReference type="KEGG" id="sar:SAR2474"/>
<dbReference type="HOGENOM" id="CLU_083287_3_2_9"/>
<dbReference type="Proteomes" id="UP000000596">
    <property type="component" value="Chromosome"/>
</dbReference>
<dbReference type="GO" id="GO:0005737">
    <property type="term" value="C:cytoplasm"/>
    <property type="evidence" value="ECO:0007669"/>
    <property type="project" value="UniProtKB-SubCell"/>
</dbReference>
<dbReference type="GO" id="GO:0003677">
    <property type="term" value="F:DNA binding"/>
    <property type="evidence" value="ECO:0007669"/>
    <property type="project" value="UniProtKB-KW"/>
</dbReference>
<dbReference type="GO" id="GO:0003700">
    <property type="term" value="F:DNA-binding transcription factor activity"/>
    <property type="evidence" value="ECO:0007669"/>
    <property type="project" value="InterPro"/>
</dbReference>
<dbReference type="FunFam" id="1.10.10.10:FF:000163">
    <property type="entry name" value="MarR family transcriptional regulator"/>
    <property type="match status" value="1"/>
</dbReference>
<dbReference type="Gene3D" id="1.10.10.10">
    <property type="entry name" value="Winged helix-like DNA-binding domain superfamily/Winged helix DNA-binding domain"/>
    <property type="match status" value="1"/>
</dbReference>
<dbReference type="InterPro" id="IPR000835">
    <property type="entry name" value="HTH_MarR-typ"/>
</dbReference>
<dbReference type="InterPro" id="IPR055166">
    <property type="entry name" value="Transc_reg_Sar_Rot_HTH"/>
</dbReference>
<dbReference type="InterPro" id="IPR036388">
    <property type="entry name" value="WH-like_DNA-bd_sf"/>
</dbReference>
<dbReference type="InterPro" id="IPR036390">
    <property type="entry name" value="WH_DNA-bd_sf"/>
</dbReference>
<dbReference type="PANTHER" id="PTHR42756">
    <property type="entry name" value="TRANSCRIPTIONAL REGULATOR, MARR"/>
    <property type="match status" value="1"/>
</dbReference>
<dbReference type="PANTHER" id="PTHR42756:SF1">
    <property type="entry name" value="TRANSCRIPTIONAL REPRESSOR OF EMRAB OPERON"/>
    <property type="match status" value="1"/>
</dbReference>
<dbReference type="Pfam" id="PF22381">
    <property type="entry name" value="Staph_reg_Sar_Rot"/>
    <property type="match status" value="1"/>
</dbReference>
<dbReference type="PRINTS" id="PR00598">
    <property type="entry name" value="HTHMARR"/>
</dbReference>
<dbReference type="SMART" id="SM00347">
    <property type="entry name" value="HTH_MARR"/>
    <property type="match status" value="1"/>
</dbReference>
<dbReference type="SUPFAM" id="SSF46785">
    <property type="entry name" value="Winged helix' DNA-binding domain"/>
    <property type="match status" value="1"/>
</dbReference>
<dbReference type="PROSITE" id="PS50995">
    <property type="entry name" value="HTH_MARR_2"/>
    <property type="match status" value="1"/>
</dbReference>
<organism>
    <name type="scientific">Staphylococcus aureus (strain MRSA252)</name>
    <dbReference type="NCBI Taxonomy" id="282458"/>
    <lineage>
        <taxon>Bacteria</taxon>
        <taxon>Bacillati</taxon>
        <taxon>Bacillota</taxon>
        <taxon>Bacilli</taxon>
        <taxon>Bacillales</taxon>
        <taxon>Staphylococcaceae</taxon>
        <taxon>Staphylococcus</taxon>
    </lineage>
</organism>